<proteinExistence type="inferred from homology"/>
<gene>
    <name type="primary">artP</name>
    <name type="ordered locus">Z1094</name>
    <name type="ordered locus">ECs0947</name>
</gene>
<protein>
    <recommendedName>
        <fullName evidence="1">Arginine transport ATP-binding protein ArtP</fullName>
        <ecNumber evidence="1">7.4.2.1</ecNumber>
    </recommendedName>
</protein>
<feature type="chain" id="PRO_0000091940" description="Arginine transport ATP-binding protein ArtP">
    <location>
        <begin position="1"/>
        <end position="242"/>
    </location>
</feature>
<feature type="domain" description="ABC transporter" evidence="2">
    <location>
        <begin position="3"/>
        <end position="241"/>
    </location>
</feature>
<feature type="binding site" evidence="2">
    <location>
        <begin position="35"/>
        <end position="42"/>
    </location>
    <ligand>
        <name>ATP</name>
        <dbReference type="ChEBI" id="CHEBI:30616"/>
    </ligand>
</feature>
<reference key="1">
    <citation type="journal article" date="2001" name="Nature">
        <title>Genome sequence of enterohaemorrhagic Escherichia coli O157:H7.</title>
        <authorList>
            <person name="Perna N.T."/>
            <person name="Plunkett G. III"/>
            <person name="Burland V."/>
            <person name="Mau B."/>
            <person name="Glasner J.D."/>
            <person name="Rose D.J."/>
            <person name="Mayhew G.F."/>
            <person name="Evans P.S."/>
            <person name="Gregor J."/>
            <person name="Kirkpatrick H.A."/>
            <person name="Posfai G."/>
            <person name="Hackett J."/>
            <person name="Klink S."/>
            <person name="Boutin A."/>
            <person name="Shao Y."/>
            <person name="Miller L."/>
            <person name="Grotbeck E.J."/>
            <person name="Davis N.W."/>
            <person name="Lim A."/>
            <person name="Dimalanta E.T."/>
            <person name="Potamousis K."/>
            <person name="Apodaca J."/>
            <person name="Anantharaman T.S."/>
            <person name="Lin J."/>
            <person name="Yen G."/>
            <person name="Schwartz D.C."/>
            <person name="Welch R.A."/>
            <person name="Blattner F.R."/>
        </authorList>
    </citation>
    <scope>NUCLEOTIDE SEQUENCE [LARGE SCALE GENOMIC DNA]</scope>
    <source>
        <strain>O157:H7 / EDL933 / ATCC 700927 / EHEC</strain>
    </source>
</reference>
<reference key="2">
    <citation type="journal article" date="2001" name="DNA Res.">
        <title>Complete genome sequence of enterohemorrhagic Escherichia coli O157:H7 and genomic comparison with a laboratory strain K-12.</title>
        <authorList>
            <person name="Hayashi T."/>
            <person name="Makino K."/>
            <person name="Ohnishi M."/>
            <person name="Kurokawa K."/>
            <person name="Ishii K."/>
            <person name="Yokoyama K."/>
            <person name="Han C.-G."/>
            <person name="Ohtsubo E."/>
            <person name="Nakayama K."/>
            <person name="Murata T."/>
            <person name="Tanaka M."/>
            <person name="Tobe T."/>
            <person name="Iida T."/>
            <person name="Takami H."/>
            <person name="Honda T."/>
            <person name="Sasakawa C."/>
            <person name="Ogasawara N."/>
            <person name="Yasunaga T."/>
            <person name="Kuhara S."/>
            <person name="Shiba T."/>
            <person name="Hattori M."/>
            <person name="Shinagawa H."/>
        </authorList>
    </citation>
    <scope>NUCLEOTIDE SEQUENCE [LARGE SCALE GENOMIC DNA]</scope>
    <source>
        <strain>O157:H7 / Sakai / RIMD 0509952 / EHEC</strain>
    </source>
</reference>
<comment type="function">
    <text evidence="1">Part of the ABC transporter complex ArtPIQMJ involved in arginine transport. Probably responsible for energy coupling to the transport system.</text>
</comment>
<comment type="catalytic activity">
    <reaction evidence="1">
        <text>a polar amino acid(out) + ATP + H2O = a polar amino acid(in) + ADP + phosphate + H(+)</text>
        <dbReference type="Rhea" id="RHEA:14673"/>
        <dbReference type="ChEBI" id="CHEBI:15377"/>
        <dbReference type="ChEBI" id="CHEBI:15378"/>
        <dbReference type="ChEBI" id="CHEBI:30616"/>
        <dbReference type="ChEBI" id="CHEBI:43474"/>
        <dbReference type="ChEBI" id="CHEBI:62031"/>
        <dbReference type="ChEBI" id="CHEBI:456216"/>
        <dbReference type="EC" id="7.4.2.1"/>
    </reaction>
    <physiologicalReaction direction="left-to-right" evidence="1">
        <dbReference type="Rhea" id="RHEA:14674"/>
    </physiologicalReaction>
</comment>
<comment type="catalytic activity">
    <reaction evidence="1">
        <text>L-arginine(out) + ATP + H2O = L-arginine(in) + ADP + phosphate + H(+)</text>
        <dbReference type="Rhea" id="RHEA:29879"/>
        <dbReference type="ChEBI" id="CHEBI:15377"/>
        <dbReference type="ChEBI" id="CHEBI:15378"/>
        <dbReference type="ChEBI" id="CHEBI:30616"/>
        <dbReference type="ChEBI" id="CHEBI:32682"/>
        <dbReference type="ChEBI" id="CHEBI:43474"/>
        <dbReference type="ChEBI" id="CHEBI:456216"/>
        <dbReference type="EC" id="7.4.2.1"/>
    </reaction>
    <physiologicalReaction direction="left-to-right" evidence="1">
        <dbReference type="Rhea" id="RHEA:29880"/>
    </physiologicalReaction>
</comment>
<comment type="subunit">
    <text evidence="1">The complex is composed of two ATP-binding proteins (ArtP), two transmembrane proteins (ArtM and ArtQ) and two solute-binding proteins (ArtJ and ArtI).</text>
</comment>
<comment type="subcellular location">
    <subcellularLocation>
        <location evidence="1">Cell inner membrane</location>
        <topology evidence="1">Peripheral membrane protein</topology>
    </subcellularLocation>
</comment>
<comment type="similarity">
    <text evidence="3">Belongs to the ABC transporter superfamily.</text>
</comment>
<keyword id="KW-0029">Amino-acid transport</keyword>
<keyword id="KW-0067">ATP-binding</keyword>
<keyword id="KW-0997">Cell inner membrane</keyword>
<keyword id="KW-1003">Cell membrane</keyword>
<keyword id="KW-0472">Membrane</keyword>
<keyword id="KW-0547">Nucleotide-binding</keyword>
<keyword id="KW-1185">Reference proteome</keyword>
<keyword id="KW-1278">Translocase</keyword>
<keyword id="KW-0813">Transport</keyword>
<evidence type="ECO:0000250" key="1">
    <source>
        <dbReference type="UniProtKB" id="P0AAF6"/>
    </source>
</evidence>
<evidence type="ECO:0000255" key="2">
    <source>
        <dbReference type="PROSITE-ProRule" id="PRU00434"/>
    </source>
</evidence>
<evidence type="ECO:0000305" key="3"/>
<accession>P0AAF8</accession>
<accession>P30858</accession>
<accession>P77355</accession>
<sequence>MSIQLNGINCFYGAHQALFDITLDCPQGETLVLLGPSGAGKSSLLRVLNLLEMPRSGTLNIAGNHFDFTKTPSDKAIRDLRRNVGMVFQQYNLWPHLTVQQNLIEAPCRVLGLSKDQALARAEKLLERLRLKPYSDRYPLHLSGGQQQRVAIARALMMEPQVLLFDEPTAALDPEITAQIVSIIRELAETNITQVIVTHEVEVARKTASRVVYMENGHIVEQGDASCFTEPQTEAFKNYLSH</sequence>
<organism>
    <name type="scientific">Escherichia coli O157:H7</name>
    <dbReference type="NCBI Taxonomy" id="83334"/>
    <lineage>
        <taxon>Bacteria</taxon>
        <taxon>Pseudomonadati</taxon>
        <taxon>Pseudomonadota</taxon>
        <taxon>Gammaproteobacteria</taxon>
        <taxon>Enterobacterales</taxon>
        <taxon>Enterobacteriaceae</taxon>
        <taxon>Escherichia</taxon>
    </lineage>
</organism>
<dbReference type="EC" id="7.4.2.1" evidence="1"/>
<dbReference type="EMBL" id="AE005174">
    <property type="protein sequence ID" value="AAG55243.1"/>
    <property type="molecule type" value="Genomic_DNA"/>
</dbReference>
<dbReference type="EMBL" id="BA000007">
    <property type="protein sequence ID" value="BAB34370.1"/>
    <property type="molecule type" value="Genomic_DNA"/>
</dbReference>
<dbReference type="PIR" id="C90747">
    <property type="entry name" value="C90747"/>
</dbReference>
<dbReference type="PIR" id="G85597">
    <property type="entry name" value="G85597"/>
</dbReference>
<dbReference type="RefSeq" id="NP_308974.1">
    <property type="nucleotide sequence ID" value="NC_002695.1"/>
</dbReference>
<dbReference type="RefSeq" id="WP_000027205.1">
    <property type="nucleotide sequence ID" value="NZ_VOAI01000006.1"/>
</dbReference>
<dbReference type="SMR" id="P0AAF8"/>
<dbReference type="STRING" id="155864.Z1094"/>
<dbReference type="GeneID" id="917689"/>
<dbReference type="GeneID" id="93776558"/>
<dbReference type="KEGG" id="ece:Z1094"/>
<dbReference type="KEGG" id="ecs:ECs_0947"/>
<dbReference type="PATRIC" id="fig|386585.9.peg.1065"/>
<dbReference type="eggNOG" id="COG1126">
    <property type="taxonomic scope" value="Bacteria"/>
</dbReference>
<dbReference type="HOGENOM" id="CLU_000604_1_22_6"/>
<dbReference type="OMA" id="YMEQGHI"/>
<dbReference type="Proteomes" id="UP000000558">
    <property type="component" value="Chromosome"/>
</dbReference>
<dbReference type="Proteomes" id="UP000002519">
    <property type="component" value="Chromosome"/>
</dbReference>
<dbReference type="GO" id="GO:0005886">
    <property type="term" value="C:plasma membrane"/>
    <property type="evidence" value="ECO:0007669"/>
    <property type="project" value="UniProtKB-SubCell"/>
</dbReference>
<dbReference type="GO" id="GO:0005524">
    <property type="term" value="F:ATP binding"/>
    <property type="evidence" value="ECO:0007669"/>
    <property type="project" value="UniProtKB-KW"/>
</dbReference>
<dbReference type="GO" id="GO:0016887">
    <property type="term" value="F:ATP hydrolysis activity"/>
    <property type="evidence" value="ECO:0007669"/>
    <property type="project" value="InterPro"/>
</dbReference>
<dbReference type="GO" id="GO:0015426">
    <property type="term" value="F:ATPase-coupled polar amino acid-transporter activity"/>
    <property type="evidence" value="ECO:0007669"/>
    <property type="project" value="RHEA"/>
</dbReference>
<dbReference type="FunFam" id="3.40.50.300:FF:000331">
    <property type="entry name" value="Arginine ABC transporter ATP-binding protein ArtP"/>
    <property type="match status" value="1"/>
</dbReference>
<dbReference type="Gene3D" id="3.40.50.300">
    <property type="entry name" value="P-loop containing nucleotide triphosphate hydrolases"/>
    <property type="match status" value="1"/>
</dbReference>
<dbReference type="InterPro" id="IPR003593">
    <property type="entry name" value="AAA+_ATPase"/>
</dbReference>
<dbReference type="InterPro" id="IPR030679">
    <property type="entry name" value="ABC_ATPase_HisP-typ"/>
</dbReference>
<dbReference type="InterPro" id="IPR003439">
    <property type="entry name" value="ABC_transporter-like_ATP-bd"/>
</dbReference>
<dbReference type="InterPro" id="IPR017871">
    <property type="entry name" value="ABC_transporter-like_CS"/>
</dbReference>
<dbReference type="InterPro" id="IPR050086">
    <property type="entry name" value="MetN_ABC_transporter-like"/>
</dbReference>
<dbReference type="InterPro" id="IPR027417">
    <property type="entry name" value="P-loop_NTPase"/>
</dbReference>
<dbReference type="NCBIfam" id="NF008338">
    <property type="entry name" value="PRK11124.1"/>
    <property type="match status" value="1"/>
</dbReference>
<dbReference type="PANTHER" id="PTHR43166">
    <property type="entry name" value="AMINO ACID IMPORT ATP-BINDING PROTEIN"/>
    <property type="match status" value="1"/>
</dbReference>
<dbReference type="PANTHER" id="PTHR43166:SF25">
    <property type="entry name" value="ARGININE TRANSPORT ATP-BINDING PROTEIN ARTP"/>
    <property type="match status" value="1"/>
</dbReference>
<dbReference type="Pfam" id="PF00005">
    <property type="entry name" value="ABC_tran"/>
    <property type="match status" value="1"/>
</dbReference>
<dbReference type="PIRSF" id="PIRSF039085">
    <property type="entry name" value="ABC_ATPase_HisP"/>
    <property type="match status" value="1"/>
</dbReference>
<dbReference type="SMART" id="SM00382">
    <property type="entry name" value="AAA"/>
    <property type="match status" value="1"/>
</dbReference>
<dbReference type="SUPFAM" id="SSF52540">
    <property type="entry name" value="P-loop containing nucleoside triphosphate hydrolases"/>
    <property type="match status" value="1"/>
</dbReference>
<dbReference type="PROSITE" id="PS00211">
    <property type="entry name" value="ABC_TRANSPORTER_1"/>
    <property type="match status" value="1"/>
</dbReference>
<dbReference type="PROSITE" id="PS50893">
    <property type="entry name" value="ABC_TRANSPORTER_2"/>
    <property type="match status" value="1"/>
</dbReference>
<name>ARTP_ECO57</name>